<dbReference type="EMBL" id="CT573326">
    <property type="protein sequence ID" value="CAK14077.1"/>
    <property type="molecule type" value="Genomic_DNA"/>
</dbReference>
<dbReference type="RefSeq" id="WP_011532497.1">
    <property type="nucleotide sequence ID" value="NC_008027.1"/>
</dbReference>
<dbReference type="SMR" id="Q1IE31"/>
<dbReference type="STRING" id="384676.PSEEN1181"/>
<dbReference type="GeneID" id="32804464"/>
<dbReference type="KEGG" id="pen:PSEEN1181"/>
<dbReference type="eggNOG" id="COG0254">
    <property type="taxonomic scope" value="Bacteria"/>
</dbReference>
<dbReference type="HOGENOM" id="CLU_114306_2_1_6"/>
<dbReference type="OrthoDB" id="9803251at2"/>
<dbReference type="Proteomes" id="UP000000658">
    <property type="component" value="Chromosome"/>
</dbReference>
<dbReference type="GO" id="GO:1990904">
    <property type="term" value="C:ribonucleoprotein complex"/>
    <property type="evidence" value="ECO:0007669"/>
    <property type="project" value="UniProtKB-KW"/>
</dbReference>
<dbReference type="GO" id="GO:0005840">
    <property type="term" value="C:ribosome"/>
    <property type="evidence" value="ECO:0007669"/>
    <property type="project" value="UniProtKB-KW"/>
</dbReference>
<dbReference type="GO" id="GO:0003735">
    <property type="term" value="F:structural constituent of ribosome"/>
    <property type="evidence" value="ECO:0007669"/>
    <property type="project" value="InterPro"/>
</dbReference>
<dbReference type="GO" id="GO:0006412">
    <property type="term" value="P:translation"/>
    <property type="evidence" value="ECO:0007669"/>
    <property type="project" value="UniProtKB-UniRule"/>
</dbReference>
<dbReference type="Gene3D" id="4.10.830.30">
    <property type="entry name" value="Ribosomal protein L31"/>
    <property type="match status" value="1"/>
</dbReference>
<dbReference type="HAMAP" id="MF_00502">
    <property type="entry name" value="Ribosomal_bL31_2"/>
    <property type="match status" value="1"/>
</dbReference>
<dbReference type="InterPro" id="IPR034704">
    <property type="entry name" value="Ribosomal_bL28/bL31-like_sf"/>
</dbReference>
<dbReference type="InterPro" id="IPR002150">
    <property type="entry name" value="Ribosomal_bL31"/>
</dbReference>
<dbReference type="InterPro" id="IPR027493">
    <property type="entry name" value="Ribosomal_bL31_B"/>
</dbReference>
<dbReference type="InterPro" id="IPR042105">
    <property type="entry name" value="Ribosomal_bL31_sf"/>
</dbReference>
<dbReference type="NCBIfam" id="TIGR00105">
    <property type="entry name" value="L31"/>
    <property type="match status" value="1"/>
</dbReference>
<dbReference type="NCBIfam" id="NF002462">
    <property type="entry name" value="PRK01678.1"/>
    <property type="match status" value="1"/>
</dbReference>
<dbReference type="PANTHER" id="PTHR33280">
    <property type="entry name" value="50S RIBOSOMAL PROTEIN L31, CHLOROPLASTIC"/>
    <property type="match status" value="1"/>
</dbReference>
<dbReference type="PANTHER" id="PTHR33280:SF1">
    <property type="entry name" value="LARGE RIBOSOMAL SUBUNIT PROTEIN BL31C"/>
    <property type="match status" value="1"/>
</dbReference>
<dbReference type="Pfam" id="PF01197">
    <property type="entry name" value="Ribosomal_L31"/>
    <property type="match status" value="1"/>
</dbReference>
<dbReference type="PRINTS" id="PR01249">
    <property type="entry name" value="RIBOSOMALL31"/>
</dbReference>
<dbReference type="SUPFAM" id="SSF143800">
    <property type="entry name" value="L28p-like"/>
    <property type="match status" value="1"/>
</dbReference>
<dbReference type="PROSITE" id="PS01143">
    <property type="entry name" value="RIBOSOMAL_L31"/>
    <property type="match status" value="1"/>
</dbReference>
<gene>
    <name evidence="1" type="primary">rpmE2</name>
    <name type="ordered locus">PSEEN1181</name>
</gene>
<keyword id="KW-0687">Ribonucleoprotein</keyword>
<keyword id="KW-0689">Ribosomal protein</keyword>
<organism>
    <name type="scientific">Pseudomonas entomophila (strain L48)</name>
    <dbReference type="NCBI Taxonomy" id="384676"/>
    <lineage>
        <taxon>Bacteria</taxon>
        <taxon>Pseudomonadati</taxon>
        <taxon>Pseudomonadota</taxon>
        <taxon>Gammaproteobacteria</taxon>
        <taxon>Pseudomonadales</taxon>
        <taxon>Pseudomonadaceae</taxon>
        <taxon>Pseudomonas</taxon>
    </lineage>
</organism>
<name>RL31B_PSEE4</name>
<feature type="chain" id="PRO_1000014712" description="Large ribosomal subunit protein bL31B">
    <location>
        <begin position="1"/>
        <end position="85"/>
    </location>
</feature>
<proteinExistence type="inferred from homology"/>
<accession>Q1IE31</accession>
<reference key="1">
    <citation type="journal article" date="2006" name="Nat. Biotechnol.">
        <title>Complete genome sequence of the entomopathogenic and metabolically versatile soil bacterium Pseudomonas entomophila.</title>
        <authorList>
            <person name="Vodovar N."/>
            <person name="Vallenet D."/>
            <person name="Cruveiller S."/>
            <person name="Rouy Z."/>
            <person name="Barbe V."/>
            <person name="Acosta C."/>
            <person name="Cattolico L."/>
            <person name="Jubin C."/>
            <person name="Lajus A."/>
            <person name="Segurens B."/>
            <person name="Vacherie B."/>
            <person name="Wincker P."/>
            <person name="Weissenbach J."/>
            <person name="Lemaitre B."/>
            <person name="Medigue C."/>
            <person name="Boccard F."/>
        </authorList>
    </citation>
    <scope>NUCLEOTIDE SEQUENCE [LARGE SCALE GENOMIC DNA]</scope>
    <source>
        <strain>L48</strain>
    </source>
</reference>
<sequence>MKAGIHPAYRPVLFHDTAADVYFLIGSTVDTDRTQVHSDGQTYPYVALDVSSASHPVYTGQQRKTTVEGRVAGFNKRFAGFQATR</sequence>
<evidence type="ECO:0000255" key="1">
    <source>
        <dbReference type="HAMAP-Rule" id="MF_00502"/>
    </source>
</evidence>
<evidence type="ECO:0000305" key="2"/>
<comment type="subunit">
    <text evidence="1">Part of the 50S ribosomal subunit.</text>
</comment>
<comment type="similarity">
    <text evidence="1">Belongs to the bacterial ribosomal protein bL31 family. Type B subfamily.</text>
</comment>
<protein>
    <recommendedName>
        <fullName evidence="1">Large ribosomal subunit protein bL31B</fullName>
    </recommendedName>
    <alternativeName>
        <fullName evidence="2">50S ribosomal protein L31 type B</fullName>
    </alternativeName>
</protein>